<organism>
    <name type="scientific">Legionella pneumophila (strain Corby)</name>
    <dbReference type="NCBI Taxonomy" id="400673"/>
    <lineage>
        <taxon>Bacteria</taxon>
        <taxon>Pseudomonadati</taxon>
        <taxon>Pseudomonadota</taxon>
        <taxon>Gammaproteobacteria</taxon>
        <taxon>Legionellales</taxon>
        <taxon>Legionellaceae</taxon>
        <taxon>Legionella</taxon>
    </lineage>
</organism>
<protein>
    <recommendedName>
        <fullName evidence="1">Cell division topological specificity factor</fullName>
    </recommendedName>
</protein>
<keyword id="KW-0131">Cell cycle</keyword>
<keyword id="KW-0132">Cell division</keyword>
<comment type="function">
    <text evidence="1">Prevents the cell division inhibition by proteins MinC and MinD at internal division sites while permitting inhibition at polar sites. This ensures cell division at the proper site by restricting the formation of a division septum at the midpoint of the long axis of the cell.</text>
</comment>
<comment type="similarity">
    <text evidence="1">Belongs to the MinE family.</text>
</comment>
<gene>
    <name evidence="1" type="primary">minE</name>
    <name type="ordered locus">LPC_1165</name>
</gene>
<feature type="chain" id="PRO_1000047787" description="Cell division topological specificity factor">
    <location>
        <begin position="1"/>
        <end position="89"/>
    </location>
</feature>
<reference key="1">
    <citation type="submission" date="2006-11" db="EMBL/GenBank/DDBJ databases">
        <title>Identification and characterization of a new conjugation/ type IVA secretion system (trb/tra) of L. pneumophila Corby localized on a mobile genomic island.</title>
        <authorList>
            <person name="Gloeckner G."/>
            <person name="Albert-Weissenberger C."/>
            <person name="Weinmann E."/>
            <person name="Jacobi S."/>
            <person name="Schunder E."/>
            <person name="Steinert M."/>
            <person name="Buchrieser C."/>
            <person name="Hacker J."/>
            <person name="Heuner K."/>
        </authorList>
    </citation>
    <scope>NUCLEOTIDE SEQUENCE [LARGE SCALE GENOMIC DNA]</scope>
    <source>
        <strain>Corby</strain>
    </source>
</reference>
<dbReference type="EMBL" id="CP000675">
    <property type="protein sequence ID" value="ABQ55130.1"/>
    <property type="molecule type" value="Genomic_DNA"/>
</dbReference>
<dbReference type="RefSeq" id="WP_011213993.1">
    <property type="nucleotide sequence ID" value="NZ_JAPMSS010000005.1"/>
</dbReference>
<dbReference type="SMR" id="A5ICN0"/>
<dbReference type="GeneID" id="57035714"/>
<dbReference type="KEGG" id="lpc:LPC_1165"/>
<dbReference type="HOGENOM" id="CLU_137929_2_1_6"/>
<dbReference type="GO" id="GO:0051301">
    <property type="term" value="P:cell division"/>
    <property type="evidence" value="ECO:0007669"/>
    <property type="project" value="UniProtKB-KW"/>
</dbReference>
<dbReference type="GO" id="GO:0032955">
    <property type="term" value="P:regulation of division septum assembly"/>
    <property type="evidence" value="ECO:0007669"/>
    <property type="project" value="InterPro"/>
</dbReference>
<dbReference type="FunFam" id="3.30.1070.10:FF:000001">
    <property type="entry name" value="Cell division topological specificity factor"/>
    <property type="match status" value="1"/>
</dbReference>
<dbReference type="Gene3D" id="3.30.1070.10">
    <property type="entry name" value="Cell division topological specificity factor MinE"/>
    <property type="match status" value="1"/>
</dbReference>
<dbReference type="HAMAP" id="MF_00262">
    <property type="entry name" value="MinE"/>
    <property type="match status" value="1"/>
</dbReference>
<dbReference type="InterPro" id="IPR005527">
    <property type="entry name" value="MinE"/>
</dbReference>
<dbReference type="InterPro" id="IPR036707">
    <property type="entry name" value="MinE_sf"/>
</dbReference>
<dbReference type="NCBIfam" id="TIGR01215">
    <property type="entry name" value="minE"/>
    <property type="match status" value="1"/>
</dbReference>
<dbReference type="NCBIfam" id="NF001422">
    <property type="entry name" value="PRK00296.1"/>
    <property type="match status" value="1"/>
</dbReference>
<dbReference type="Pfam" id="PF03776">
    <property type="entry name" value="MinE"/>
    <property type="match status" value="1"/>
</dbReference>
<dbReference type="SUPFAM" id="SSF55229">
    <property type="entry name" value="Cell division protein MinE topological specificity domain"/>
    <property type="match status" value="1"/>
</dbReference>
<proteinExistence type="inferred from homology"/>
<accession>A5ICN0</accession>
<evidence type="ECO:0000255" key="1">
    <source>
        <dbReference type="HAMAP-Rule" id="MF_00262"/>
    </source>
</evidence>
<name>MINE_LEGPC</name>
<sequence>MSIFNYLRRRASTASVAKERLQIIISHERSQRNTPDYLPKLQEEILAVIAKYVNISRDQVSVNLERMEDSAVLELNITMPDKALEDSNS</sequence>